<dbReference type="EC" id="3.4.22.-"/>
<dbReference type="EMBL" id="AC016827">
    <property type="protein sequence ID" value="AAF26995.1"/>
    <property type="status" value="ALT_SEQ"/>
    <property type="molecule type" value="Genomic_DNA"/>
</dbReference>
<dbReference type="EMBL" id="CP002686">
    <property type="protein sequence ID" value="AEE74475.1"/>
    <property type="molecule type" value="Genomic_DNA"/>
</dbReference>
<dbReference type="EMBL" id="AK117529">
    <property type="protein sequence ID" value="BAC42191.1"/>
    <property type="molecule type" value="mRNA"/>
</dbReference>
<dbReference type="RefSeq" id="NP_187347.2">
    <property type="nucleotide sequence ID" value="NM_111571.3"/>
</dbReference>
<dbReference type="SMR" id="Q8GYL3"/>
<dbReference type="FunCoup" id="Q8GYL3">
    <property type="interactions" value="363"/>
</dbReference>
<dbReference type="STRING" id="3702.Q8GYL3"/>
<dbReference type="MEROPS" id="C48.A02"/>
<dbReference type="iPTMnet" id="Q8GYL3"/>
<dbReference type="PaxDb" id="3702-AT3G06910.1"/>
<dbReference type="ProteomicsDB" id="245306"/>
<dbReference type="EnsemblPlants" id="AT3G06910.1">
    <property type="protein sequence ID" value="AT3G06910.1"/>
    <property type="gene ID" value="AT3G06910"/>
</dbReference>
<dbReference type="GeneID" id="819876"/>
<dbReference type="Gramene" id="AT3G06910.1">
    <property type="protein sequence ID" value="AT3G06910.1"/>
    <property type="gene ID" value="AT3G06910"/>
</dbReference>
<dbReference type="KEGG" id="ath:AT3G06910"/>
<dbReference type="Araport" id="AT3G06910"/>
<dbReference type="TAIR" id="AT3G06910">
    <property type="gene designation" value="ULP1A"/>
</dbReference>
<dbReference type="eggNOG" id="KOG0778">
    <property type="taxonomic scope" value="Eukaryota"/>
</dbReference>
<dbReference type="HOGENOM" id="CLU_024324_6_2_1"/>
<dbReference type="InParanoid" id="Q8GYL3"/>
<dbReference type="OMA" id="NIHWTLA"/>
<dbReference type="BRENDA" id="3.4.22.68">
    <property type="organism ID" value="399"/>
</dbReference>
<dbReference type="PRO" id="PR:Q8GYL3"/>
<dbReference type="Proteomes" id="UP000006548">
    <property type="component" value="Chromosome 3"/>
</dbReference>
<dbReference type="ExpressionAtlas" id="Q8GYL3">
    <property type="expression patterns" value="baseline and differential"/>
</dbReference>
<dbReference type="GO" id="GO:0005737">
    <property type="term" value="C:cytoplasm"/>
    <property type="evidence" value="ECO:0000314"/>
    <property type="project" value="TAIR"/>
</dbReference>
<dbReference type="GO" id="GO:0009506">
    <property type="term" value="C:plasmodesma"/>
    <property type="evidence" value="ECO:0007005"/>
    <property type="project" value="TAIR"/>
</dbReference>
<dbReference type="GO" id="GO:0016929">
    <property type="term" value="F:deSUMOylase activity"/>
    <property type="evidence" value="ECO:0000314"/>
    <property type="project" value="TAIR"/>
</dbReference>
<dbReference type="GO" id="GO:0016926">
    <property type="term" value="P:protein desumoylation"/>
    <property type="evidence" value="ECO:0000314"/>
    <property type="project" value="TAIR"/>
</dbReference>
<dbReference type="GO" id="GO:0006508">
    <property type="term" value="P:proteolysis"/>
    <property type="evidence" value="ECO:0007669"/>
    <property type="project" value="UniProtKB-KW"/>
</dbReference>
<dbReference type="FunFam" id="3.40.395.10:FF:000005">
    <property type="entry name" value="Ubiquitin-like-specific protease ESD4"/>
    <property type="match status" value="1"/>
</dbReference>
<dbReference type="Gene3D" id="3.40.395.10">
    <property type="entry name" value="Adenoviral Proteinase, Chain A"/>
    <property type="match status" value="1"/>
</dbReference>
<dbReference type="InterPro" id="IPR038765">
    <property type="entry name" value="Papain-like_cys_pep_sf"/>
</dbReference>
<dbReference type="InterPro" id="IPR003653">
    <property type="entry name" value="Peptidase_C48_C"/>
</dbReference>
<dbReference type="PANTHER" id="PTHR12606">
    <property type="entry name" value="SENTRIN/SUMO-SPECIFIC PROTEASE"/>
    <property type="match status" value="1"/>
</dbReference>
<dbReference type="PANTHER" id="PTHR12606:SF1">
    <property type="entry name" value="UBIQUITIN-LIKE-SPECIFIC PROTEASE 1A"/>
    <property type="match status" value="1"/>
</dbReference>
<dbReference type="Pfam" id="PF02902">
    <property type="entry name" value="Peptidase_C48"/>
    <property type="match status" value="1"/>
</dbReference>
<dbReference type="SUPFAM" id="SSF54001">
    <property type="entry name" value="Cysteine proteinases"/>
    <property type="match status" value="1"/>
</dbReference>
<dbReference type="PROSITE" id="PS50600">
    <property type="entry name" value="ULP_PROTEASE"/>
    <property type="match status" value="1"/>
</dbReference>
<accession>Q8GYL3</accession>
<accession>Q9M908</accession>
<protein>
    <recommendedName>
        <fullName>Ubiquitin-like-specific protease 1A</fullName>
        <ecNumber>3.4.22.-</ecNumber>
    </recommendedName>
</protein>
<gene>
    <name type="primary">ULP1A</name>
    <name type="ordered locus">At3g06910</name>
    <name type="ORF">F17A9.6</name>
</gene>
<proteinExistence type="evidence at transcript level"/>
<reference key="1">
    <citation type="journal article" date="2000" name="Nature">
        <title>Sequence and analysis of chromosome 3 of the plant Arabidopsis thaliana.</title>
        <authorList>
            <person name="Salanoubat M."/>
            <person name="Lemcke K."/>
            <person name="Rieger M."/>
            <person name="Ansorge W."/>
            <person name="Unseld M."/>
            <person name="Fartmann B."/>
            <person name="Valle G."/>
            <person name="Bloecker H."/>
            <person name="Perez-Alonso M."/>
            <person name="Obermaier B."/>
            <person name="Delseny M."/>
            <person name="Boutry M."/>
            <person name="Grivell L.A."/>
            <person name="Mache R."/>
            <person name="Puigdomenech P."/>
            <person name="De Simone V."/>
            <person name="Choisne N."/>
            <person name="Artiguenave F."/>
            <person name="Robert C."/>
            <person name="Brottier P."/>
            <person name="Wincker P."/>
            <person name="Cattolico L."/>
            <person name="Weissenbach J."/>
            <person name="Saurin W."/>
            <person name="Quetier F."/>
            <person name="Schaefer M."/>
            <person name="Mueller-Auer S."/>
            <person name="Gabel C."/>
            <person name="Fuchs M."/>
            <person name="Benes V."/>
            <person name="Wurmbach E."/>
            <person name="Drzonek H."/>
            <person name="Erfle H."/>
            <person name="Jordan N."/>
            <person name="Bangert S."/>
            <person name="Wiedelmann R."/>
            <person name="Kranz H."/>
            <person name="Voss H."/>
            <person name="Holland R."/>
            <person name="Brandt P."/>
            <person name="Nyakatura G."/>
            <person name="Vezzi A."/>
            <person name="D'Angelo M."/>
            <person name="Pallavicini A."/>
            <person name="Toppo S."/>
            <person name="Simionati B."/>
            <person name="Conrad A."/>
            <person name="Hornischer K."/>
            <person name="Kauer G."/>
            <person name="Loehnert T.-H."/>
            <person name="Nordsiek G."/>
            <person name="Reichelt J."/>
            <person name="Scharfe M."/>
            <person name="Schoen O."/>
            <person name="Bargues M."/>
            <person name="Terol J."/>
            <person name="Climent J."/>
            <person name="Navarro P."/>
            <person name="Collado C."/>
            <person name="Perez-Perez A."/>
            <person name="Ottenwaelder B."/>
            <person name="Duchemin D."/>
            <person name="Cooke R."/>
            <person name="Laudie M."/>
            <person name="Berger-Llauro C."/>
            <person name="Purnelle B."/>
            <person name="Masuy D."/>
            <person name="de Haan M."/>
            <person name="Maarse A.C."/>
            <person name="Alcaraz J.-P."/>
            <person name="Cottet A."/>
            <person name="Casacuberta E."/>
            <person name="Monfort A."/>
            <person name="Argiriou A."/>
            <person name="Flores M."/>
            <person name="Liguori R."/>
            <person name="Vitale D."/>
            <person name="Mannhaupt G."/>
            <person name="Haase D."/>
            <person name="Schoof H."/>
            <person name="Rudd S."/>
            <person name="Zaccaria P."/>
            <person name="Mewes H.-W."/>
            <person name="Mayer K.F.X."/>
            <person name="Kaul S."/>
            <person name="Town C.D."/>
            <person name="Koo H.L."/>
            <person name="Tallon L.J."/>
            <person name="Jenkins J."/>
            <person name="Rooney T."/>
            <person name="Rizzo M."/>
            <person name="Walts A."/>
            <person name="Utterback T."/>
            <person name="Fujii C.Y."/>
            <person name="Shea T.P."/>
            <person name="Creasy T.H."/>
            <person name="Haas B."/>
            <person name="Maiti R."/>
            <person name="Wu D."/>
            <person name="Peterson J."/>
            <person name="Van Aken S."/>
            <person name="Pai G."/>
            <person name="Militscher J."/>
            <person name="Sellers P."/>
            <person name="Gill J.E."/>
            <person name="Feldblyum T.V."/>
            <person name="Preuss D."/>
            <person name="Lin X."/>
            <person name="Nierman W.C."/>
            <person name="Salzberg S.L."/>
            <person name="White O."/>
            <person name="Venter J.C."/>
            <person name="Fraser C.M."/>
            <person name="Kaneko T."/>
            <person name="Nakamura Y."/>
            <person name="Sato S."/>
            <person name="Kato T."/>
            <person name="Asamizu E."/>
            <person name="Sasamoto S."/>
            <person name="Kimura T."/>
            <person name="Idesawa K."/>
            <person name="Kawashima K."/>
            <person name="Kishida Y."/>
            <person name="Kiyokawa C."/>
            <person name="Kohara M."/>
            <person name="Matsumoto M."/>
            <person name="Matsuno A."/>
            <person name="Muraki A."/>
            <person name="Nakayama S."/>
            <person name="Nakazaki N."/>
            <person name="Shinpo S."/>
            <person name="Takeuchi C."/>
            <person name="Wada T."/>
            <person name="Watanabe A."/>
            <person name="Yamada M."/>
            <person name="Yasuda M."/>
            <person name="Tabata S."/>
        </authorList>
    </citation>
    <scope>NUCLEOTIDE SEQUENCE [LARGE SCALE GENOMIC DNA]</scope>
    <source>
        <strain>cv. Columbia</strain>
    </source>
</reference>
<reference key="2">
    <citation type="journal article" date="2017" name="Plant J.">
        <title>Araport11: a complete reannotation of the Arabidopsis thaliana reference genome.</title>
        <authorList>
            <person name="Cheng C.Y."/>
            <person name="Krishnakumar V."/>
            <person name="Chan A.P."/>
            <person name="Thibaud-Nissen F."/>
            <person name="Schobel S."/>
            <person name="Town C.D."/>
        </authorList>
    </citation>
    <scope>GENOME REANNOTATION</scope>
    <source>
        <strain>cv. Columbia</strain>
    </source>
</reference>
<reference key="3">
    <citation type="journal article" date="2002" name="Science">
        <title>Functional annotation of a full-length Arabidopsis cDNA collection.</title>
        <authorList>
            <person name="Seki M."/>
            <person name="Narusaka M."/>
            <person name="Kamiya A."/>
            <person name="Ishida J."/>
            <person name="Satou M."/>
            <person name="Sakurai T."/>
            <person name="Nakajima M."/>
            <person name="Enju A."/>
            <person name="Akiyama K."/>
            <person name="Oono Y."/>
            <person name="Muramatsu M."/>
            <person name="Hayashizaki Y."/>
            <person name="Kawai J."/>
            <person name="Carninci P."/>
            <person name="Itoh M."/>
            <person name="Ishii Y."/>
            <person name="Arakawa T."/>
            <person name="Shibata K."/>
            <person name="Shinagawa A."/>
            <person name="Shinozaki K."/>
        </authorList>
    </citation>
    <scope>NUCLEOTIDE SEQUENCE [LARGE SCALE MRNA]</scope>
    <source>
        <strain>cv. Columbia</strain>
    </source>
</reference>
<reference key="4">
    <citation type="journal article" date="2003" name="J. Biol. Chem.">
        <title>The small ubiquitin-like modifier (SUMO) protein modification system in Arabidopsis. Accumulation of SUMO1 and -2 conjugates is increased by stress.</title>
        <authorList>
            <person name="Kurepa J."/>
            <person name="Walker J.M."/>
            <person name="Smalle J."/>
            <person name="Gosink M.M."/>
            <person name="Davis S.J."/>
            <person name="Durham T.L."/>
            <person name="Sung D.Y."/>
            <person name="Vierstra R.D."/>
        </authorList>
    </citation>
    <scope>IDENTIFICATION</scope>
    <scope>GENE FAMILY</scope>
    <scope>NOMENCLATURE</scope>
</reference>
<reference key="5">
    <citation type="journal article" date="2006" name="Biochem. J.">
        <title>Evolution of a signalling system that incorporates both redundancy and diversity: Arabidopsis SUMOylation.</title>
        <authorList>
            <person name="Chosed R."/>
            <person name="Mukherjee S."/>
            <person name="Lois L.M."/>
            <person name="Orth K."/>
        </authorList>
    </citation>
    <scope>FUNCTION</scope>
</reference>
<reference key="6">
    <citation type="journal article" date="2006" name="Plant Physiol.">
        <title>SUMO-conjugating and SUMO-deconjugating enzymes from Arabidopsis.</title>
        <authorList>
            <person name="Colby T."/>
            <person name="Matthai A."/>
            <person name="Boeckelmann A."/>
            <person name="Stuible H.P."/>
        </authorList>
    </citation>
    <scope>GENE FAMILY</scope>
    <scope>NOMENCLATURE</scope>
</reference>
<organism>
    <name type="scientific">Arabidopsis thaliana</name>
    <name type="common">Mouse-ear cress</name>
    <dbReference type="NCBI Taxonomy" id="3702"/>
    <lineage>
        <taxon>Eukaryota</taxon>
        <taxon>Viridiplantae</taxon>
        <taxon>Streptophyta</taxon>
        <taxon>Embryophyta</taxon>
        <taxon>Tracheophyta</taxon>
        <taxon>Spermatophyta</taxon>
        <taxon>Magnoliopsida</taxon>
        <taxon>eudicotyledons</taxon>
        <taxon>Gunneridae</taxon>
        <taxon>Pentapetalae</taxon>
        <taxon>rosids</taxon>
        <taxon>malvids</taxon>
        <taxon>Brassicales</taxon>
        <taxon>Brassicaceae</taxon>
        <taxon>Camelineae</taxon>
        <taxon>Arabidopsis</taxon>
    </lineage>
</organism>
<comment type="function">
    <text evidence="2">Protease that catalyzes two essential functions in the SUMO pathway: processing of full-length SUMOs to their mature forms and deconjugation of SUMO from targeted proteins. Cleaves precursors of SUM1 and SUM2, and very inefficiently of SUM3. Seems to be the only ULP1 able to cleave SUM3 precursors. Cleaves SUMO peptides better than SUMO-conjugated proteins.</text>
</comment>
<comment type="domain">
    <text>The N-terminal regulatory domain is required for peptidase activity in vitro.</text>
</comment>
<comment type="similarity">
    <text evidence="3">Belongs to the peptidase C48 family.</text>
</comment>
<comment type="sequence caution" evidence="3">
    <conflict type="erroneous gene model prediction">
        <sequence resource="EMBL-CDS" id="AAF26995"/>
    </conflict>
</comment>
<name>ULP1A_ARATH</name>
<feature type="chain" id="PRO_0000395968" description="Ubiquitin-like-specific protease 1A">
    <location>
        <begin position="1"/>
        <end position="502"/>
    </location>
</feature>
<feature type="active site" evidence="1">
    <location>
        <position position="393"/>
    </location>
</feature>
<feature type="active site" evidence="1">
    <location>
        <position position="410"/>
    </location>
</feature>
<feature type="active site" evidence="1">
    <location>
        <position position="461"/>
    </location>
</feature>
<feature type="sequence conflict" description="In Ref. 3; BAC42191." evidence="3" ref="3">
    <original>F</original>
    <variation>I</variation>
    <location>
        <position position="349"/>
    </location>
</feature>
<sequence length="502" mass="58169">MKNQSRVLNSELGDFDLSVLWDQILNFEGYGSYCFRPMDMDGYHKRSAGLNPCKHSGFSHSSRPMAPGIYRYPEVKSSLRRQVHAPVRILNSGRDRSTRQGSGNVLGTFLTRNNDMWKRNALDSSLRYRTDREVIDVDDELGDVEMISDDTSREGVENVAMEVDEVEEKAEMGNGLFSEVASLKNGSLRVGECSKANSSSLVVNRPVTDVTSFEAYRKVLESAVNRTSKLKDRGFVDFFKERGRALLRSLSSFWRQDEEPVEVVQREAFVPLSREEETAVRRAFSANDSNILVTHKNSNIDITGKILRCLKPGKWLNDEVINLYMVLLKEREAREPKKFLKCHFFNTFFFTKLVNSATGYNYGAVRRWTSMKRLGYHLKDCDKIFIPIHMNIHWTLAVINIKDQKFQYLDSFKGREPKILDALARYFVDEVRDKSEVDLDVSRWRQEFVQDLPMQRNGFDCGMFMVKYIDFYSRGLDLCFTQEQMPYFRARTAKEILQLKAE</sequence>
<evidence type="ECO:0000250" key="1"/>
<evidence type="ECO:0000269" key="2">
    <source>
    </source>
</evidence>
<evidence type="ECO:0000305" key="3"/>
<keyword id="KW-0378">Hydrolase</keyword>
<keyword id="KW-0645">Protease</keyword>
<keyword id="KW-1185">Reference proteome</keyword>
<keyword id="KW-0788">Thiol protease</keyword>
<keyword id="KW-0833">Ubl conjugation pathway</keyword>